<keyword id="KW-0002">3D-structure</keyword>
<keyword id="KW-0007">Acetylation</keyword>
<keyword id="KW-0009">Actin-binding</keyword>
<keyword id="KW-0966">Cell projection</keyword>
<keyword id="KW-0963">Cytoplasm</keyword>
<keyword id="KW-0206">Cytoskeleton</keyword>
<keyword id="KW-0539">Nucleus</keyword>
<keyword id="KW-1185">Reference proteome</keyword>
<keyword id="KW-0832">Ubl conjugation</keyword>
<proteinExistence type="evidence at protein level"/>
<name>ARPC5_BOVIN</name>
<comment type="function">
    <text evidence="1">Component of the Arp2/3 complex, a multiprotein complex that mediates actin polymerization upon stimulation by nucleation-promoting factor (NPF). The Arp2/3 complex mediates the formation of branched actin networks in the cytoplasm, providing the force for cell motility. In addition to its role in the cytoplasmic cytoskeleton, the Arp2/3 complex also promotes actin polymerization in the nucleus, thereby regulating gene transcription and repair of damaged DNA. The Arp2/3 complex promotes homologous recombination (HR) repair in response to DNA damage by promoting nuclear actin polymerization, leading to drive motility of double-strand breaks (DSBs).</text>
</comment>
<comment type="subunit">
    <text evidence="3 4">Component of the Arp2/3 complex composed of ACTR2/ARP2, ACTR3/ARP3, ARPC1B/p41-ARC, ARPC2/p34-ARC, ARPC3/p21-ARC, ARPC4/p20-ARC and ARPC5/p16-ARC.</text>
</comment>
<comment type="subcellular location">
    <subcellularLocation>
        <location evidence="1">Cytoplasm</location>
        <location evidence="1">Cytoskeleton</location>
    </subcellularLocation>
    <subcellularLocation>
        <location evidence="1">Cell projection</location>
    </subcellularLocation>
    <subcellularLocation>
        <location evidence="1">Nucleus</location>
    </subcellularLocation>
</comment>
<comment type="PTM">
    <text evidence="1">Polyubiquitinated by RNF128 with 'Lys-63'-linked chains, leading to proteasomal degradation.</text>
</comment>
<comment type="similarity">
    <text evidence="5">Belongs to the ARPC5 family.</text>
</comment>
<accession>Q3SYX9</accession>
<evidence type="ECO:0000250" key="1">
    <source>
        <dbReference type="UniProtKB" id="O15511"/>
    </source>
</evidence>
<evidence type="ECO:0000256" key="2">
    <source>
        <dbReference type="SAM" id="MobiDB-lite"/>
    </source>
</evidence>
<evidence type="ECO:0000269" key="3">
    <source>
    </source>
</evidence>
<evidence type="ECO:0000269" key="4">
    <source>
    </source>
</evidence>
<evidence type="ECO:0000305" key="5"/>
<evidence type="ECO:0007829" key="6">
    <source>
        <dbReference type="PDB" id="1K8K"/>
    </source>
</evidence>
<evidence type="ECO:0007829" key="7">
    <source>
        <dbReference type="PDB" id="2P9K"/>
    </source>
</evidence>
<evidence type="ECO:0007829" key="8">
    <source>
        <dbReference type="PDB" id="2P9N"/>
    </source>
</evidence>
<gene>
    <name type="primary">ARPC5</name>
</gene>
<protein>
    <recommendedName>
        <fullName>Actin-related protein 2/3 complex subunit 5</fullName>
    </recommendedName>
    <alternativeName>
        <fullName>Arp2/3 complex 16 kDa subunit</fullName>
        <shortName>p16-ARC</shortName>
    </alternativeName>
</protein>
<organism>
    <name type="scientific">Bos taurus</name>
    <name type="common">Bovine</name>
    <dbReference type="NCBI Taxonomy" id="9913"/>
    <lineage>
        <taxon>Eukaryota</taxon>
        <taxon>Metazoa</taxon>
        <taxon>Chordata</taxon>
        <taxon>Craniata</taxon>
        <taxon>Vertebrata</taxon>
        <taxon>Euteleostomi</taxon>
        <taxon>Mammalia</taxon>
        <taxon>Eutheria</taxon>
        <taxon>Laurasiatheria</taxon>
        <taxon>Artiodactyla</taxon>
        <taxon>Ruminantia</taxon>
        <taxon>Pecora</taxon>
        <taxon>Bovidae</taxon>
        <taxon>Bovinae</taxon>
        <taxon>Bos</taxon>
    </lineage>
</organism>
<dbReference type="EMBL" id="BC103337">
    <property type="protein sequence ID" value="AAI03338.1"/>
    <property type="molecule type" value="mRNA"/>
</dbReference>
<dbReference type="RefSeq" id="NP_001030524.1">
    <property type="nucleotide sequence ID" value="NM_001035447.2"/>
</dbReference>
<dbReference type="PDB" id="1K8K">
    <property type="method" value="X-ray"/>
    <property type="resolution" value="2.00 A"/>
    <property type="chains" value="G=1-151"/>
</dbReference>
<dbReference type="PDB" id="1TYQ">
    <property type="method" value="X-ray"/>
    <property type="resolution" value="2.55 A"/>
    <property type="chains" value="G=1-151"/>
</dbReference>
<dbReference type="PDB" id="1U2V">
    <property type="method" value="X-ray"/>
    <property type="resolution" value="2.55 A"/>
    <property type="chains" value="G=1-151"/>
</dbReference>
<dbReference type="PDB" id="2P9I">
    <property type="method" value="X-ray"/>
    <property type="resolution" value="2.46 A"/>
    <property type="chains" value="G=1-151"/>
</dbReference>
<dbReference type="PDB" id="2P9K">
    <property type="method" value="X-ray"/>
    <property type="resolution" value="2.59 A"/>
    <property type="chains" value="G=1-151"/>
</dbReference>
<dbReference type="PDB" id="2P9L">
    <property type="method" value="X-ray"/>
    <property type="resolution" value="2.65 A"/>
    <property type="chains" value="G=1-151"/>
</dbReference>
<dbReference type="PDB" id="2P9N">
    <property type="method" value="X-ray"/>
    <property type="resolution" value="2.85 A"/>
    <property type="chains" value="G=1-151"/>
</dbReference>
<dbReference type="PDB" id="2P9P">
    <property type="method" value="X-ray"/>
    <property type="resolution" value="2.90 A"/>
    <property type="chains" value="G=1-151"/>
</dbReference>
<dbReference type="PDB" id="2P9S">
    <property type="method" value="X-ray"/>
    <property type="resolution" value="2.68 A"/>
    <property type="chains" value="G=1-151"/>
</dbReference>
<dbReference type="PDB" id="2P9U">
    <property type="method" value="X-ray"/>
    <property type="resolution" value="2.75 A"/>
    <property type="chains" value="G=1-151"/>
</dbReference>
<dbReference type="PDB" id="3DXK">
    <property type="method" value="X-ray"/>
    <property type="resolution" value="2.70 A"/>
    <property type="chains" value="G=1-151"/>
</dbReference>
<dbReference type="PDB" id="3DXM">
    <property type="method" value="X-ray"/>
    <property type="resolution" value="2.85 A"/>
    <property type="chains" value="G=1-151"/>
</dbReference>
<dbReference type="PDB" id="3RSE">
    <property type="method" value="X-ray"/>
    <property type="resolution" value="2.65 A"/>
    <property type="chains" value="G=1-151"/>
</dbReference>
<dbReference type="PDB" id="3UKR">
    <property type="method" value="X-ray"/>
    <property type="resolution" value="2.48 A"/>
    <property type="chains" value="G=1-151"/>
</dbReference>
<dbReference type="PDB" id="3UKU">
    <property type="method" value="X-ray"/>
    <property type="resolution" value="2.75 A"/>
    <property type="chains" value="G=1-151"/>
</dbReference>
<dbReference type="PDB" id="3ULE">
    <property type="method" value="X-ray"/>
    <property type="resolution" value="2.50 A"/>
    <property type="chains" value="G=1-151"/>
</dbReference>
<dbReference type="PDB" id="4JD2">
    <property type="method" value="X-ray"/>
    <property type="resolution" value="3.08 A"/>
    <property type="chains" value="G=1-151"/>
</dbReference>
<dbReference type="PDB" id="4XEI">
    <property type="method" value="X-ray"/>
    <property type="resolution" value="3.87 A"/>
    <property type="chains" value="G=1-151"/>
</dbReference>
<dbReference type="PDB" id="4XF2">
    <property type="method" value="X-ray"/>
    <property type="resolution" value="5.00 A"/>
    <property type="chains" value="G/Z=1-151"/>
</dbReference>
<dbReference type="PDB" id="6DEC">
    <property type="method" value="X-ray"/>
    <property type="resolution" value="4.60 A"/>
    <property type="chains" value="G/O=1-151"/>
</dbReference>
<dbReference type="PDB" id="7T5Q">
    <property type="method" value="EM"/>
    <property type="resolution" value="3.40 A"/>
    <property type="chains" value="G=1-151"/>
</dbReference>
<dbReference type="PDB" id="7TPT">
    <property type="method" value="EM"/>
    <property type="resolution" value="3.90 A"/>
    <property type="chains" value="G=1-151"/>
</dbReference>
<dbReference type="PDB" id="9DLX">
    <property type="method" value="EM"/>
    <property type="resolution" value="2.91 A"/>
    <property type="chains" value="G=1-151"/>
</dbReference>
<dbReference type="PDB" id="9DLZ">
    <property type="method" value="EM"/>
    <property type="resolution" value="3.40 A"/>
    <property type="chains" value="G=7-151"/>
</dbReference>
<dbReference type="PDBsum" id="1K8K"/>
<dbReference type="PDBsum" id="1TYQ"/>
<dbReference type="PDBsum" id="1U2V"/>
<dbReference type="PDBsum" id="2P9I"/>
<dbReference type="PDBsum" id="2P9K"/>
<dbReference type="PDBsum" id="2P9L"/>
<dbReference type="PDBsum" id="2P9N"/>
<dbReference type="PDBsum" id="2P9P"/>
<dbReference type="PDBsum" id="2P9S"/>
<dbReference type="PDBsum" id="2P9U"/>
<dbReference type="PDBsum" id="3DXK"/>
<dbReference type="PDBsum" id="3DXM"/>
<dbReference type="PDBsum" id="3RSE"/>
<dbReference type="PDBsum" id="3UKR"/>
<dbReference type="PDBsum" id="3UKU"/>
<dbReference type="PDBsum" id="3ULE"/>
<dbReference type="PDBsum" id="4JD2"/>
<dbReference type="PDBsum" id="4XEI"/>
<dbReference type="PDBsum" id="4XF2"/>
<dbReference type="PDBsum" id="6DEC"/>
<dbReference type="PDBsum" id="7T5Q"/>
<dbReference type="PDBsum" id="7TPT"/>
<dbReference type="PDBsum" id="9DLX"/>
<dbReference type="PDBsum" id="9DLZ"/>
<dbReference type="EMDB" id="EMD-25707"/>
<dbReference type="EMDB" id="EMD-26063"/>
<dbReference type="EMDB" id="EMD-46992"/>
<dbReference type="EMDB" id="EMD-46993"/>
<dbReference type="SMR" id="Q3SYX9"/>
<dbReference type="DIP" id="DIP-29795N"/>
<dbReference type="FunCoup" id="Q3SYX9">
    <property type="interactions" value="1492"/>
</dbReference>
<dbReference type="IntAct" id="Q3SYX9">
    <property type="interactions" value="2"/>
</dbReference>
<dbReference type="STRING" id="9913.ENSBTAP00000054193"/>
<dbReference type="PaxDb" id="9913-ENSBTAP00000054193"/>
<dbReference type="PeptideAtlas" id="Q3SYX9"/>
<dbReference type="GeneID" id="614345"/>
<dbReference type="KEGG" id="bta:614345"/>
<dbReference type="CTD" id="10092"/>
<dbReference type="eggNOG" id="KOG3380">
    <property type="taxonomic scope" value="Eukaryota"/>
</dbReference>
<dbReference type="InParanoid" id="Q3SYX9"/>
<dbReference type="OrthoDB" id="429520at2759"/>
<dbReference type="EvolutionaryTrace" id="Q3SYX9"/>
<dbReference type="Proteomes" id="UP000009136">
    <property type="component" value="Unplaced"/>
</dbReference>
<dbReference type="GO" id="GO:0005885">
    <property type="term" value="C:Arp2/3 protein complex"/>
    <property type="evidence" value="ECO:0000250"/>
    <property type="project" value="UniProtKB"/>
</dbReference>
<dbReference type="GO" id="GO:0042995">
    <property type="term" value="C:cell projection"/>
    <property type="evidence" value="ECO:0007669"/>
    <property type="project" value="UniProtKB-SubCell"/>
</dbReference>
<dbReference type="GO" id="GO:0005737">
    <property type="term" value="C:cytoplasm"/>
    <property type="evidence" value="ECO:0000318"/>
    <property type="project" value="GO_Central"/>
</dbReference>
<dbReference type="GO" id="GO:0005829">
    <property type="term" value="C:cytosol"/>
    <property type="evidence" value="ECO:0000304"/>
    <property type="project" value="Reactome"/>
</dbReference>
<dbReference type="GO" id="GO:0005634">
    <property type="term" value="C:nucleus"/>
    <property type="evidence" value="ECO:0000250"/>
    <property type="project" value="UniProtKB"/>
</dbReference>
<dbReference type="GO" id="GO:0035861">
    <property type="term" value="C:site of double-strand break"/>
    <property type="evidence" value="ECO:0000250"/>
    <property type="project" value="UniProtKB"/>
</dbReference>
<dbReference type="GO" id="GO:0051015">
    <property type="term" value="F:actin filament binding"/>
    <property type="evidence" value="ECO:0000318"/>
    <property type="project" value="GO_Central"/>
</dbReference>
<dbReference type="GO" id="GO:0034314">
    <property type="term" value="P:Arp2/3 complex-mediated actin nucleation"/>
    <property type="evidence" value="ECO:0000318"/>
    <property type="project" value="GO_Central"/>
</dbReference>
<dbReference type="GO" id="GO:0016477">
    <property type="term" value="P:cell migration"/>
    <property type="evidence" value="ECO:0000318"/>
    <property type="project" value="GO_Central"/>
</dbReference>
<dbReference type="GO" id="GO:0030833">
    <property type="term" value="P:regulation of actin filament polymerization"/>
    <property type="evidence" value="ECO:0007669"/>
    <property type="project" value="InterPro"/>
</dbReference>
<dbReference type="FunFam" id="1.25.40.190:FF:000001">
    <property type="entry name" value="Actin-related protein 2/3 complex subunit 5"/>
    <property type="match status" value="1"/>
</dbReference>
<dbReference type="Gene3D" id="1.25.40.190">
    <property type="entry name" value="Actin-related protein 2/3 complex subunit 5"/>
    <property type="match status" value="1"/>
</dbReference>
<dbReference type="InterPro" id="IPR006789">
    <property type="entry name" value="ARPC5"/>
</dbReference>
<dbReference type="InterPro" id="IPR036743">
    <property type="entry name" value="ARPC5_sf"/>
</dbReference>
<dbReference type="PANTHER" id="PTHR12644">
    <property type="entry name" value="ARP2/3 COMPLEX 16 KD SUBUNIT P16-ARC"/>
    <property type="match status" value="1"/>
</dbReference>
<dbReference type="Pfam" id="PF04699">
    <property type="entry name" value="P16-Arc"/>
    <property type="match status" value="1"/>
</dbReference>
<dbReference type="PIRSF" id="PIRSF039096">
    <property type="entry name" value="p16-ARC"/>
    <property type="match status" value="1"/>
</dbReference>
<dbReference type="SUPFAM" id="SSF69103">
    <property type="entry name" value="Arp2/3 complex 16 kDa subunit ARPC5"/>
    <property type="match status" value="1"/>
</dbReference>
<feature type="initiator methionine" description="Removed" evidence="1">
    <location>
        <position position="1"/>
    </location>
</feature>
<feature type="chain" id="PRO_0000246172" description="Actin-related protein 2/3 complex subunit 5">
    <location>
        <begin position="2"/>
        <end position="151"/>
    </location>
</feature>
<feature type="region of interest" description="Disordered" evidence="2">
    <location>
        <begin position="21"/>
        <end position="42"/>
    </location>
</feature>
<feature type="modified residue" description="N-acetylserine" evidence="1">
    <location>
        <position position="2"/>
    </location>
</feature>
<feature type="helix" evidence="6">
    <location>
        <begin position="10"/>
        <end position="12"/>
    </location>
</feature>
<feature type="helix" evidence="6">
    <location>
        <begin position="16"/>
        <end position="19"/>
    </location>
</feature>
<feature type="strand" evidence="7">
    <location>
        <begin position="21"/>
        <end position="23"/>
    </location>
</feature>
<feature type="helix" evidence="6">
    <location>
        <begin position="39"/>
        <end position="47"/>
    </location>
</feature>
<feature type="helix" evidence="6">
    <location>
        <begin position="51"/>
        <end position="58"/>
    </location>
</feature>
<feature type="strand" evidence="8">
    <location>
        <begin position="59"/>
        <end position="61"/>
    </location>
</feature>
<feature type="helix" evidence="6">
    <location>
        <begin position="69"/>
        <end position="85"/>
    </location>
</feature>
<feature type="helix" evidence="6">
    <location>
        <begin position="88"/>
        <end position="90"/>
    </location>
</feature>
<feature type="helix" evidence="6">
    <location>
        <begin position="91"/>
        <end position="96"/>
    </location>
</feature>
<feature type="helix" evidence="6">
    <location>
        <begin position="100"/>
        <end position="114"/>
    </location>
</feature>
<feature type="helix" evidence="6">
    <location>
        <begin position="121"/>
        <end position="145"/>
    </location>
</feature>
<reference key="1">
    <citation type="submission" date="2005-08" db="EMBL/GenBank/DDBJ databases">
        <authorList>
            <consortium name="NIH - Mammalian Gene Collection (MGC) project"/>
        </authorList>
    </citation>
    <scope>NUCLEOTIDE SEQUENCE [LARGE SCALE MRNA]</scope>
    <source>
        <strain>Crossbred X Angus</strain>
        <tissue>Ileum</tissue>
    </source>
</reference>
<reference key="2">
    <citation type="journal article" date="2001" name="Science">
        <title>Crystal structure of Arp2/3 complex.</title>
        <authorList>
            <person name="Robinson R.C."/>
            <person name="Turbedsky K."/>
            <person name="Kaiser D.A."/>
            <person name="Marchand J.-B."/>
            <person name="Higgs H.N."/>
            <person name="Choe S."/>
            <person name="Pollard T.D."/>
        </authorList>
    </citation>
    <scope>X-RAY CRYSTALLOGRAPHY (2.0 ANGSTROMS) OF ARP2/3 COMPLEX</scope>
</reference>
<reference key="3">
    <citation type="journal article" date="2004" name="Proc. Natl. Acad. Sci. U.S.A.">
        <title>Crystal structures of actin-related protein 2/3 complex with bound ATP or ADP.</title>
        <authorList>
            <person name="Nolen B.J."/>
            <person name="Littlefield R.S."/>
            <person name="Pollard T.D."/>
        </authorList>
    </citation>
    <scope>X-RAY CRYSTALLOGRAPHY (2.55 ANGSTROMS) OF ARP2/3 COMPLEX WITH BOUND ATP</scope>
</reference>
<sequence>MSKNTVSSARFRKVDVGEYDENKFVDEEDGGDGQAGPDEGEVDSCLRQGNMTAALQAALKNPPINTKSQAVKDRAGSIVLKVLISFKANDIEKAVQSLDKNGVDLLMKYIYKGFESPSDNSSAVLLQWHEKALAAGGVGSIVRVLTARKTV</sequence>